<protein>
    <recommendedName>
        <fullName>Dihydroorotate dehydrogenase (quinone), mitochondrial</fullName>
        <shortName>DHOD</shortName>
        <shortName>DHODase</shortName>
        <shortName>DHOdehase</shortName>
        <ecNumber>1.3.5.2</ecNumber>
    </recommendedName>
    <alternativeName>
        <fullName>Dihydroorotate oxidase</fullName>
    </alternativeName>
</protein>
<feature type="transit peptide" description="Mitochondrion" evidence="2">
    <location>
        <begin position="1"/>
        <end position="13"/>
    </location>
</feature>
<feature type="chain" id="PRO_0000029895" description="Dihydroorotate dehydrogenase (quinone), mitochondrial">
    <location>
        <begin position="14"/>
        <end position="446"/>
    </location>
</feature>
<feature type="transmembrane region" description="Helical" evidence="2">
    <location>
        <begin position="40"/>
        <end position="57"/>
    </location>
</feature>
<feature type="active site" description="Nucleophile" evidence="1">
    <location>
        <position position="255"/>
    </location>
</feature>
<feature type="binding site" evidence="1">
    <location>
        <begin position="125"/>
        <end position="129"/>
    </location>
    <ligand>
        <name>FMN</name>
        <dbReference type="ChEBI" id="CHEBI:58210"/>
    </ligand>
</feature>
<feature type="binding site" evidence="1">
    <location>
        <position position="129"/>
    </location>
    <ligand>
        <name>substrate</name>
    </ligand>
</feature>
<feature type="binding site" evidence="1">
    <location>
        <position position="149"/>
    </location>
    <ligand>
        <name>FMN</name>
        <dbReference type="ChEBI" id="CHEBI:58210"/>
    </ligand>
</feature>
<feature type="binding site" evidence="1">
    <location>
        <begin position="174"/>
        <end position="178"/>
    </location>
    <ligand>
        <name>substrate</name>
    </ligand>
</feature>
<feature type="binding site" evidence="1">
    <location>
        <position position="222"/>
    </location>
    <ligand>
        <name>FMN</name>
        <dbReference type="ChEBI" id="CHEBI:58210"/>
    </ligand>
</feature>
<feature type="binding site" evidence="1">
    <location>
        <begin position="252"/>
        <end position="257"/>
    </location>
    <ligand>
        <name>substrate</name>
    </ligand>
</feature>
<feature type="binding site" evidence="1">
    <location>
        <position position="252"/>
    </location>
    <ligand>
        <name>FMN</name>
        <dbReference type="ChEBI" id="CHEBI:58210"/>
    </ligand>
</feature>
<feature type="binding site" evidence="1">
    <location>
        <position position="252"/>
    </location>
    <ligand>
        <name>substrate</name>
    </ligand>
</feature>
<feature type="binding site" evidence="1">
    <location>
        <position position="303"/>
    </location>
    <ligand>
        <name>FMN</name>
        <dbReference type="ChEBI" id="CHEBI:58210"/>
    </ligand>
</feature>
<feature type="binding site" evidence="1">
    <location>
        <position position="331"/>
    </location>
    <ligand>
        <name>FMN</name>
        <dbReference type="ChEBI" id="CHEBI:58210"/>
    </ligand>
</feature>
<feature type="binding site" evidence="1">
    <location>
        <begin position="332"/>
        <end position="333"/>
    </location>
    <ligand>
        <name>substrate</name>
    </ligand>
</feature>
<feature type="binding site" evidence="1">
    <location>
        <position position="357"/>
    </location>
    <ligand>
        <name>FMN</name>
        <dbReference type="ChEBI" id="CHEBI:58210"/>
    </ligand>
</feature>
<feature type="binding site" evidence="1">
    <location>
        <position position="387"/>
    </location>
    <ligand>
        <name>FMN</name>
        <dbReference type="ChEBI" id="CHEBI:58210"/>
    </ligand>
</feature>
<feature type="binding site" evidence="1">
    <location>
        <begin position="408"/>
        <end position="409"/>
    </location>
    <ligand>
        <name>FMN</name>
        <dbReference type="ChEBI" id="CHEBI:58210"/>
    </ligand>
</feature>
<accession>Q6V3W9</accession>
<dbReference type="EC" id="1.3.5.2"/>
<dbReference type="EMBL" id="AY352582">
    <property type="protein sequence ID" value="AAQ57201.1"/>
    <property type="molecule type" value="Genomic_DNA"/>
</dbReference>
<dbReference type="EMBL" id="AF452108">
    <property type="protein sequence ID" value="AAQ04682.1"/>
    <property type="molecule type" value="Genomic_DNA"/>
</dbReference>
<dbReference type="SMR" id="Q6V3W9"/>
<dbReference type="SABIO-RK" id="Q6V3W9"/>
<dbReference type="UniPathway" id="UPA00070">
    <property type="reaction ID" value="UER00946"/>
</dbReference>
<dbReference type="GO" id="GO:0005743">
    <property type="term" value="C:mitochondrial inner membrane"/>
    <property type="evidence" value="ECO:0007669"/>
    <property type="project" value="UniProtKB-SubCell"/>
</dbReference>
<dbReference type="GO" id="GO:0106430">
    <property type="term" value="F:dihydroorotate dehydrogenase (quinone) activity"/>
    <property type="evidence" value="ECO:0007669"/>
    <property type="project" value="UniProtKB-EC"/>
</dbReference>
<dbReference type="GO" id="GO:0006207">
    <property type="term" value="P:'de novo' pyrimidine nucleobase biosynthetic process"/>
    <property type="evidence" value="ECO:0007669"/>
    <property type="project" value="InterPro"/>
</dbReference>
<dbReference type="GO" id="GO:0044205">
    <property type="term" value="P:'de novo' UMP biosynthetic process"/>
    <property type="evidence" value="ECO:0007669"/>
    <property type="project" value="UniProtKB-UniPathway"/>
</dbReference>
<dbReference type="CDD" id="cd04738">
    <property type="entry name" value="DHOD_2_like"/>
    <property type="match status" value="1"/>
</dbReference>
<dbReference type="FunFam" id="3.20.20.70:FF:000066">
    <property type="entry name" value="Dihydroorotate dehydrogenase (quinone), mitochondrial"/>
    <property type="match status" value="1"/>
</dbReference>
<dbReference type="Gene3D" id="3.20.20.70">
    <property type="entry name" value="Aldolase class I"/>
    <property type="match status" value="1"/>
</dbReference>
<dbReference type="InterPro" id="IPR013785">
    <property type="entry name" value="Aldolase_TIM"/>
</dbReference>
<dbReference type="InterPro" id="IPR050074">
    <property type="entry name" value="DHO_dehydrogenase"/>
</dbReference>
<dbReference type="InterPro" id="IPR005719">
    <property type="entry name" value="Dihydroorotate_DH_2"/>
</dbReference>
<dbReference type="InterPro" id="IPR005720">
    <property type="entry name" value="Dihydroorotate_DH_cat"/>
</dbReference>
<dbReference type="InterPro" id="IPR001295">
    <property type="entry name" value="Dihydroorotate_DH_CS"/>
</dbReference>
<dbReference type="NCBIfam" id="NF003645">
    <property type="entry name" value="PRK05286.1-2"/>
    <property type="match status" value="1"/>
</dbReference>
<dbReference type="NCBIfam" id="NF003652">
    <property type="entry name" value="PRK05286.2-5"/>
    <property type="match status" value="1"/>
</dbReference>
<dbReference type="NCBIfam" id="TIGR01036">
    <property type="entry name" value="pyrD_sub2"/>
    <property type="match status" value="1"/>
</dbReference>
<dbReference type="PANTHER" id="PTHR48109:SF4">
    <property type="entry name" value="DIHYDROOROTATE DEHYDROGENASE (QUINONE), MITOCHONDRIAL"/>
    <property type="match status" value="1"/>
</dbReference>
<dbReference type="PANTHER" id="PTHR48109">
    <property type="entry name" value="DIHYDROOROTATE DEHYDROGENASE (QUINONE), MITOCHONDRIAL-RELATED"/>
    <property type="match status" value="1"/>
</dbReference>
<dbReference type="Pfam" id="PF01180">
    <property type="entry name" value="DHO_dh"/>
    <property type="match status" value="1"/>
</dbReference>
<dbReference type="SUPFAM" id="SSF51395">
    <property type="entry name" value="FMN-linked oxidoreductases"/>
    <property type="match status" value="1"/>
</dbReference>
<dbReference type="PROSITE" id="PS00911">
    <property type="entry name" value="DHODEHASE_1"/>
    <property type="match status" value="1"/>
</dbReference>
<dbReference type="PROSITE" id="PS00912">
    <property type="entry name" value="DHODEHASE_2"/>
    <property type="match status" value="1"/>
</dbReference>
<organism>
    <name type="scientific">Lachancea kluyveri (strain ATCC 58438 / CBS 3082 / BCRC 21498 / NBRC 1685 / JCM 7257 / NCYC 543 / NRRL Y-12651)</name>
    <name type="common">Yeast</name>
    <name type="synonym">Saccharomyces kluyveri</name>
    <dbReference type="NCBI Taxonomy" id="226302"/>
    <lineage>
        <taxon>Eukaryota</taxon>
        <taxon>Fungi</taxon>
        <taxon>Dikarya</taxon>
        <taxon>Ascomycota</taxon>
        <taxon>Saccharomycotina</taxon>
        <taxon>Saccharomycetes</taxon>
        <taxon>Saccharomycetales</taxon>
        <taxon>Saccharomycetaceae</taxon>
        <taxon>Lachancea</taxon>
    </lineage>
</organism>
<keyword id="KW-0285">Flavoprotein</keyword>
<keyword id="KW-0288">FMN</keyword>
<keyword id="KW-0472">Membrane</keyword>
<keyword id="KW-0496">Mitochondrion</keyword>
<keyword id="KW-0999">Mitochondrion inner membrane</keyword>
<keyword id="KW-0560">Oxidoreductase</keyword>
<keyword id="KW-0665">Pyrimidine biosynthesis</keyword>
<keyword id="KW-0809">Transit peptide</keyword>
<keyword id="KW-0812">Transmembrane</keyword>
<keyword id="KW-1133">Transmembrane helix</keyword>
<comment type="function">
    <text evidence="1">Catalyzes the conversion of dihydroorotate to orotate with quinone as electron acceptor.</text>
</comment>
<comment type="catalytic activity">
    <reaction>
        <text>(S)-dihydroorotate + a quinone = orotate + a quinol</text>
        <dbReference type="Rhea" id="RHEA:30187"/>
        <dbReference type="ChEBI" id="CHEBI:24646"/>
        <dbReference type="ChEBI" id="CHEBI:30839"/>
        <dbReference type="ChEBI" id="CHEBI:30864"/>
        <dbReference type="ChEBI" id="CHEBI:132124"/>
        <dbReference type="EC" id="1.3.5.2"/>
    </reaction>
</comment>
<comment type="cofactor">
    <cofactor evidence="1">
        <name>FMN</name>
        <dbReference type="ChEBI" id="CHEBI:58210"/>
    </cofactor>
    <text evidence="1">Binds 1 FMN per subunit.</text>
</comment>
<comment type="activity regulation">
    <text evidence="3">The activity is dependent of the presence of oxygen.</text>
</comment>
<comment type="pathway">
    <text>Pyrimidine metabolism; UMP biosynthesis via de novo pathway; orotate from (S)-dihydroorotate (quinone route): step 1/1.</text>
</comment>
<comment type="subcellular location">
    <subcellularLocation>
        <location evidence="1">Mitochondrion inner membrane</location>
        <topology evidence="4">Single-pass membrane protein</topology>
    </subcellularLocation>
</comment>
<comment type="miscellaneous">
    <text>S.kluyveri has two isoforms of DHODase, a cytoplasmic isoform and a mitochondrial isoform.</text>
</comment>
<comment type="similarity">
    <text evidence="4">Belongs to the dihydroorotate dehydrogenase family. Type 2 subfamily.</text>
</comment>
<sequence length="446" mass="48467">MHSRPLPTLGRHAARSVLNSPNFFIGNRAYPLKSSVGAKAILYTAGILGGAFAGYYLFNARSAIHEYLLCPILRLATPDAENGHRAGIFCLKWGLAPKLLFDEDDEVLHVNVFGTKMTNPIGCAAGLDKDAEAIDGIMQGGFGYMEIGSVTPLPQPGNPKPRFFRLPQDDAVINRYGFNSSGHDAVYSNLSKRVTSFLKSYFAKDNEIDKLSLYKNKLLAINLGKNKTGDEVKDYLKGVEKFQSHADVLVINVSSPNTPGLRDLQNESKLTDLLSQIVQKRNSLIQNGNVLGAKTHKPPVLVKIAPDLTEPELESIAVAAKKSKVDGIIVSNTTIQRPDSLVTRDEALKSQTGGLSGKPLKPFALKALKTVYKYTKDSELVLVGCGGISSGQDAIEFAKAGATFVQLYTSYAYKGPGLIAHIKDEVTEELKKEGKTWNQIIGEDSK</sequence>
<gene>
    <name type="primary">URA9</name>
</gene>
<evidence type="ECO:0000250" key="1"/>
<evidence type="ECO:0000255" key="2"/>
<evidence type="ECO:0000269" key="3">
    <source>
    </source>
</evidence>
<evidence type="ECO:0000305" key="4"/>
<reference key="1">
    <citation type="journal article" date="2005" name="Eukaryot. Cell">
        <title>Contribution of horizontal gene transfer to the evolution of Saccharomyces cerevisiae.</title>
        <authorList>
            <person name="Hall C.R."/>
            <person name="Brachat S."/>
            <person name="Dietrich F.S."/>
        </authorList>
    </citation>
    <scope>NUCLEOTIDE SEQUENCE [GENOMIC DNA]</scope>
    <source>
        <strain>ATCC 58438 / CBS 3082 / BCRC 21498 / NBRC 1685 / JCM 7257 / NCYC 543 / NRRL Y-12651</strain>
    </source>
</reference>
<reference key="2">
    <citation type="journal article" date="2004" name="Mol. Genet. Genomics">
        <title>Horizontal gene transfer promoted evolution of the ability to propagate under anaerobic conditions in yeasts.</title>
        <authorList>
            <person name="Gojkovic Z."/>
            <person name="Knecht W."/>
            <person name="Zameitat E."/>
            <person name="Warneboldt J."/>
            <person name="Coutelis J.-B."/>
            <person name="Pynyaha Y."/>
            <person name="Neuveglise C."/>
            <person name="Moeller K."/>
            <person name="Loeffler M."/>
            <person name="Piskur J."/>
        </authorList>
    </citation>
    <scope>NUCLEOTIDE SEQUENCE [GENOMIC DNA]</scope>
    <scope>ACTIVITY REGULATION</scope>
    <scope>CHARACTERIZATION</scope>
</reference>
<proteinExistence type="evidence at protein level"/>
<name>PYRD_LACK1</name>